<protein>
    <recommendedName>
        <fullName evidence="3">LC-AMP precursor 3</fullName>
    </recommendedName>
    <component>
        <recommendedName>
            <fullName evidence="3">Antimicrobial peptide LC-AMP-D1</fullName>
        </recommendedName>
    </component>
    <component>
        <recommendedName>
            <fullName evidence="3">Antimicrobial peptide LC-AMP-D2</fullName>
        </recommendedName>
    </component>
    <component>
        <recommendedName>
            <fullName evidence="3">Antimicrobial peptide LC-AMP-D3</fullName>
        </recommendedName>
    </component>
    <component>
        <recommendedName>
            <fullName evidence="3">Antimicrobial peptide LC-AMP-I1</fullName>
        </recommendedName>
    </component>
</protein>
<reference key="1">
    <citation type="journal article" date="2025" name="Antimicrob. Agents Chemother.">
        <title>LC-AMP-I1, a novel venom-derived antimicrobial peptide from the wolf spider Lycosa coelestis.</title>
        <authorList>
            <person name="Wang J."/>
            <person name="Liu X."/>
            <person name="Song Y."/>
            <person name="Liu Z."/>
            <person name="Tang X."/>
            <person name="Tan H."/>
        </authorList>
    </citation>
    <scope>NUCLEOTIDE SEQUENCE [MRNA]</scope>
    <scope>PROTEIN SEQUENCE OF 90-114</scope>
    <scope>FUNCTION</scope>
    <scope>MASS SPECTROMETRY</scope>
    <scope>SUBCELLULAR LOCATION</scope>
    <scope>AMIDATION AT SER-114</scope>
    <scope>PROBABLE AMIDATION AT LEU-74; LEU-147; LEU-180; SER-213; LEU-246 AND SER-279</scope>
    <scope>BIOPHYSICOCHEMICAL PROPERTIES</scope>
    <scope>SYNTHESIS OF 90-114</scope>
    <source>
        <tissue>Venom</tissue>
        <tissue>Venom gland</tissue>
    </source>
</reference>
<accession>P0DRJ4</accession>
<sequence>MKYTIIPFLLLVALTCATARSIDGSEKEVQEIREETPSSNEDVPFSLSANEDEEARGRLQAFLAKMKEIAAQTLGREESLSANEDEEARGRMQEFIKKLKAYLRKMKEKFSQISGREESFSANEDEEERGRLQAFLAKMKAIAAQTLGREESISANEDEETRGRLQAFLAKMKEIAAQTLGREESLSAIEDEEARGRLQAFLAKMKEIAAQTLGREESLSANEDEEARGRLQAFLAKTKEIAAQTLGREESLSANEDEEARGRLQAFLAKMKEIAAQTLGR</sequence>
<organism>
    <name type="scientific">Lycosa coelestis</name>
    <name type="common">Wolf spider</name>
    <dbReference type="NCBI Taxonomy" id="93699"/>
    <lineage>
        <taxon>Eukaryota</taxon>
        <taxon>Metazoa</taxon>
        <taxon>Ecdysozoa</taxon>
        <taxon>Arthropoda</taxon>
        <taxon>Chelicerata</taxon>
        <taxon>Arachnida</taxon>
        <taxon>Araneae</taxon>
        <taxon>Araneomorphae</taxon>
        <taxon>Entelegynae</taxon>
        <taxon>Lycosoidea</taxon>
        <taxon>Lycosidae</taxon>
        <taxon>Lycosa</taxon>
    </lineage>
</organism>
<comment type="function">
    <molecule>Antimicrobial peptide LC-AMP-I1</molecule>
    <text evidence="2">Antimicrobial peptide that acts by influencing bacterial cell membrane permeability at low concentrations and by directly disrupting structure-function at high concentrations. Shows activity against Gram-negative bacteria (S.typhimurium CGMCC 1.1174 (MIC=2.5 uM), E.coli CCTCC AB 2018675 (MIC=5 uM), S.dysenteriae CGMCC 1.1869 (MIC=2.5 uM), P.aeruginosa CGMCC 1.596 (MIC 5-10 uM), K.pneumoniae (MIC=10 uM), A.baumannii (MIC=5-10 uM)), and Gram-positive bacteria (S.aureus CMCC 26003 or MRSA ATCC 43300 (MIC=5 uM), and E.faecium (MIC=2.5-5 uM)). Inhibits biofilm formation of E.coli and S.aureus in a dose-dependent manner and disrupts established biofilms. Demonstrates minimal bacterial resistance, excellent stability, negligible mammalian cell toxicity, low hemolytic activity, and appropriate selectivity for both normal and tumor cells. When combined with traditional antibiotics, exhibits additive or synergistic therapeutic effects. In vivo, in a neutropenic mouse thigh infection model, exhibits a therapeutic effect in inhibiting bacterial proliferation.</text>
</comment>
<comment type="biophysicochemical properties">
    <phDependence>
        <text evidence="2">Optimum pH is &lt;8.</text>
    </phDependence>
    <temperatureDependence>
        <text evidence="2">Retains its effectiveness even after exposure to 100 degrees Celsius.</text>
    </temperatureDependence>
</comment>
<comment type="subcellular location">
    <subcellularLocation>
        <location evidence="2">Secreted</location>
    </subcellularLocation>
</comment>
<comment type="tissue specificity">
    <text evidence="5">Expressed by the venom gland.</text>
</comment>
<comment type="mass spectrometry">
    <molecule>Antimicrobial peptide LC-AMP-I1</molecule>
    <text>Monoisotopic mass.</text>
</comment>
<comment type="online information" name="The antimicrobial peptide database">
    <link uri="https://wangapd3.com/database/query_output.php?ID=05069"/>
</comment>
<feature type="signal peptide" evidence="1">
    <location>
        <begin position="1"/>
        <end position="19"/>
    </location>
</feature>
<feature type="propeptide" id="PRO_0000462505" evidence="5">
    <location>
        <begin position="20"/>
        <end position="56"/>
    </location>
</feature>
<feature type="peptide" id="PRO_0000462506" description="Antimicrobial peptide LC-AMP-D1" evidence="3">
    <location>
        <begin position="57"/>
        <end position="74"/>
    </location>
</feature>
<feature type="propeptide" id="PRO_0000462507" evidence="5">
    <location>
        <begin position="75"/>
        <end position="89"/>
    </location>
</feature>
<feature type="peptide" id="PRO_0000462508" description="Antimicrobial peptide LC-AMP-I1" evidence="2">
    <location>
        <begin position="90"/>
        <end position="114"/>
    </location>
</feature>
<feature type="propeptide" id="PRO_0000462509" evidence="5">
    <location>
        <begin position="115"/>
        <end position="129"/>
    </location>
</feature>
<feature type="peptide" id="PRO_0000462510" description="Antimicrobial peptide LC-AMP-D3" evidence="5">
    <location>
        <begin position="130"/>
        <end position="147"/>
    </location>
</feature>
<feature type="propeptide" id="PRO_0000462511" evidence="5">
    <location>
        <begin position="148"/>
        <end position="162"/>
    </location>
</feature>
<feature type="peptide" id="PRO_0000462512" description="Antimicrobial peptide LC-AMP-D1" evidence="5">
    <location>
        <begin position="163"/>
        <end position="180"/>
    </location>
</feature>
<feature type="propeptide" id="PRO_0000462513" evidence="5">
    <location>
        <begin position="181"/>
        <end position="195"/>
    </location>
</feature>
<feature type="peptide" id="PRO_0000462514" description="Antimicrobial peptide LC-AMP-D1" evidence="5">
    <location>
        <begin position="196"/>
        <end position="213"/>
    </location>
</feature>
<feature type="propeptide" id="PRO_0000462515" evidence="5">
    <location>
        <begin position="214"/>
        <end position="228"/>
    </location>
</feature>
<feature type="peptide" id="PRO_0000462516" description="Antimicrobial peptide LC-AMP-D2" evidence="5">
    <location>
        <begin position="229"/>
        <end position="246"/>
    </location>
</feature>
<feature type="propeptide" id="PRO_0000462517" evidence="5">
    <location>
        <begin position="247"/>
        <end position="261"/>
    </location>
</feature>
<feature type="peptide" id="PRO_0000462518" description="Antimicrobial peptide LC-AMP-D1" evidence="5">
    <location>
        <begin position="262"/>
        <end position="279"/>
    </location>
</feature>
<feature type="modified residue" description="Leucine amide" evidence="4">
    <location>
        <position position="74"/>
    </location>
</feature>
<feature type="modified residue" description="Serine amide" evidence="2">
    <location>
        <position position="114"/>
    </location>
</feature>
<feature type="modified residue" description="Leucine amide" evidence="4">
    <location>
        <position position="147"/>
    </location>
</feature>
<feature type="modified residue" description="Leucine amide" evidence="4">
    <location>
        <position position="180"/>
    </location>
</feature>
<feature type="modified residue" description="Leucine amide" evidence="4">
    <location>
        <position position="213"/>
    </location>
</feature>
<feature type="modified residue" description="Leucine amide" evidence="4">
    <location>
        <position position="246"/>
    </location>
</feature>
<feature type="modified residue" description="Leucine amide" evidence="4">
    <location>
        <position position="279"/>
    </location>
</feature>
<evidence type="ECO:0000255" key="1"/>
<evidence type="ECO:0000269" key="2">
    <source>
    </source>
</evidence>
<evidence type="ECO:0000303" key="3">
    <source>
    </source>
</evidence>
<evidence type="ECO:0000305" key="4"/>
<evidence type="ECO:0000305" key="5">
    <source>
    </source>
</evidence>
<name>AMP3_LYCCO</name>
<keyword id="KW-0027">Amidation</keyword>
<keyword id="KW-0044">Antibiotic</keyword>
<keyword id="KW-0929">Antimicrobial</keyword>
<keyword id="KW-0903">Direct protein sequencing</keyword>
<keyword id="KW-0677">Repeat</keyword>
<keyword id="KW-0964">Secreted</keyword>
<keyword id="KW-0732">Signal</keyword>
<proteinExistence type="evidence at protein level"/>